<evidence type="ECO:0000250" key="1"/>
<evidence type="ECO:0000255" key="2"/>
<evidence type="ECO:0000256" key="3">
    <source>
        <dbReference type="SAM" id="MobiDB-lite"/>
    </source>
</evidence>
<evidence type="ECO:0000305" key="4"/>
<evidence type="ECO:0000312" key="5">
    <source>
        <dbReference type="WormBase" id="W08D2.5a"/>
    </source>
</evidence>
<sequence>MVEAGGARRHRMTLESGDHTLTLFAYRTGPFRTILFYALTVLTLGIFRLILHWKQKWDVKMRMVPCTFEAAEYIYIIDNHNVSELQPVLRKSNATIPTENGEMRKVPELRWFVYRKLEYVWIDDLNSDESVDEISDNDNCWKTSFEIANRIPCRSLLAVSESNFGLTLSEISRRLEFYGRNEIVVQLRPILYLLVMEVITPFYVFQIFSVTVWYNDEYAYYASLIVILSLGSIVMDVYQIRTQEIRLRSMVHSTESVEVIREGTEMTIGSDQLVPGDILLIPPHGCLMQCDSVLMNGTVIVNESVLTGESVPITKVALTDETNDSVFNIEKNSKNVLFCGTQVLQTRFYRGKKVKAIVLRTAYSTLKGQLVRSIMYPKPVDFRFTKDLFKFILFLACISGCGFIYTIIVMIMRGNTLRRIIVRSLDIITITVPPALPAAMSVGIINAQLRLKKKEIFCISPSTINTCGAINVVCFDKTGTLTEDGLDFHVVRPVMSAVNQEIQKVKLEKSNRTEFMGEMTELTSRNGLPFDGDLVKAIATCHSLTRINGVLHGDPLDLILFQKTGWTMEEGIEGDIEEETQRFDNVQPSIIKPTDDKSAEYSVIRQFTFSSSLQRMSVIVFDPREDRPDNMMLYSKGSPEMILSLCDPNTVPEDYLLQVNSYAQHGFRLIAVARRPLDLNFNKASKVKRDAVECDLEMLGLIVMENRVKPVTLGVINQLNRANIRTVMVTGDNLLTGLSVARECGIIRPSKRAFLVEHVPGELDEYGRTKIFVKQSVSSSDEVIEDDASVSISMCSSTWKGSSEGDGFSPTNTEVETPNPVTADSLGHLIASSYHLAISGPTFAVIVHEYPELVDQLCSVCDVFARMAPDQKQSLVEQLQQIDYTVAMCGDGANDCAALKAAHAGISLSDAEASIAAPFTSKVPDIRCVPTVISEGRAALVTSFGIFKYMAGYSLTQFVTVMHLYWISNILTDGQFMYIDMFLITMFALLFGNTPAFYRLAHTPPPTRLLSIASMTSVVGQLIIIGVVQFIVFFSTSQQPWFTPYQPPVDDEVEDKRSMQGTALFCVSMFQYIILALVYSKGPPFRGNLWSNKPMCALTIFATLLCLFIVIWPTELVLKTLGNVELPSLTFRIFIVIVGAVNAAVSYGFETLFVDFFLLGYWERYKKKRSIEAIIDYVPTTNSDHIRRPSINGVTSSRTESTLLSAEGQQLHMTTSKNGKGGENPHSSALFERLISRIGGEPTWLTNPIPPHSLSEPEEPEKLERTY</sequence>
<organism>
    <name type="scientific">Caenorhabditis elegans</name>
    <dbReference type="NCBI Taxonomy" id="6239"/>
    <lineage>
        <taxon>Eukaryota</taxon>
        <taxon>Metazoa</taxon>
        <taxon>Ecdysozoa</taxon>
        <taxon>Nematoda</taxon>
        <taxon>Chromadorea</taxon>
        <taxon>Rhabditida</taxon>
        <taxon>Rhabditina</taxon>
        <taxon>Rhabditomorpha</taxon>
        <taxon>Rhabditoidea</taxon>
        <taxon>Rhabditidae</taxon>
        <taxon>Peloderinae</taxon>
        <taxon>Caenorhabditis</taxon>
    </lineage>
</organism>
<keyword id="KW-0067">ATP-binding</keyword>
<keyword id="KW-0460">Magnesium</keyword>
<keyword id="KW-0472">Membrane</keyword>
<keyword id="KW-0479">Metal-binding</keyword>
<keyword id="KW-0547">Nucleotide-binding</keyword>
<keyword id="KW-0597">Phosphoprotein</keyword>
<keyword id="KW-1185">Reference proteome</keyword>
<keyword id="KW-1278">Translocase</keyword>
<keyword id="KW-0812">Transmembrane</keyword>
<keyword id="KW-1133">Transmembrane helix</keyword>
<protein>
    <recommendedName>
        <fullName evidence="4">Probable cation-transporting ATPase catp-6</fullName>
        <ecNumber evidence="4">7.2.2.-</ecNumber>
    </recommendedName>
</protein>
<name>YH2M_CAEEL</name>
<comment type="catalytic activity">
    <reaction>
        <text>ATP + H2O = ADP + phosphate + H(+)</text>
        <dbReference type="Rhea" id="RHEA:13065"/>
        <dbReference type="ChEBI" id="CHEBI:15377"/>
        <dbReference type="ChEBI" id="CHEBI:15378"/>
        <dbReference type="ChEBI" id="CHEBI:30616"/>
        <dbReference type="ChEBI" id="CHEBI:43474"/>
        <dbReference type="ChEBI" id="CHEBI:456216"/>
    </reaction>
</comment>
<comment type="subcellular location">
    <subcellularLocation>
        <location evidence="2">Membrane</location>
        <topology evidence="2">Multi-pass membrane protein</topology>
    </subcellularLocation>
</comment>
<comment type="similarity">
    <text evidence="4">Belongs to the cation transport ATPase (P-type) (TC 3.A.3) family. Type V subfamily.</text>
</comment>
<accession>Q27533</accession>
<feature type="chain" id="PRO_0000046358" description="Probable cation-transporting ATPase catp-6">
    <location>
        <begin position="1"/>
        <end position="1267"/>
    </location>
</feature>
<feature type="topological domain" description="Extracellular" evidence="2">
    <location>
        <begin position="1"/>
        <end position="32"/>
    </location>
</feature>
<feature type="transmembrane region" description="Helical" evidence="2">
    <location>
        <begin position="33"/>
        <end position="53"/>
    </location>
</feature>
<feature type="topological domain" description="Cytoplasmic" evidence="2">
    <location>
        <begin position="54"/>
        <end position="189"/>
    </location>
</feature>
<feature type="transmembrane region" description="Helical" evidence="2">
    <location>
        <begin position="190"/>
        <end position="210"/>
    </location>
</feature>
<feature type="topological domain" description="Extracellular" evidence="2">
    <location>
        <begin position="211"/>
        <end position="217"/>
    </location>
</feature>
<feature type="transmembrane region" description="Helical" evidence="2">
    <location>
        <begin position="218"/>
        <end position="238"/>
    </location>
</feature>
<feature type="topological domain" description="Cytoplasmic" evidence="2">
    <location>
        <begin position="239"/>
        <end position="390"/>
    </location>
</feature>
<feature type="transmembrane region" description="Helical" evidence="2">
    <location>
        <begin position="391"/>
        <end position="411"/>
    </location>
</feature>
<feature type="topological domain" description="Extracellular" evidence="2">
    <location>
        <begin position="412"/>
        <end position="424"/>
    </location>
</feature>
<feature type="transmembrane region" description="Helical" evidence="2">
    <location>
        <begin position="425"/>
        <end position="445"/>
    </location>
</feature>
<feature type="topological domain" description="Cytoplasmic" evidence="2">
    <location>
        <begin position="446"/>
        <end position="950"/>
    </location>
</feature>
<feature type="transmembrane region" description="Helical" evidence="2">
    <location>
        <begin position="951"/>
        <end position="971"/>
    </location>
</feature>
<feature type="topological domain" description="Extracellular" evidence="2">
    <location>
        <begin position="972"/>
        <end position="976"/>
    </location>
</feature>
<feature type="transmembrane region" description="Helical" evidence="2">
    <location>
        <begin position="977"/>
        <end position="997"/>
    </location>
</feature>
<feature type="topological domain" description="Cytoplasmic" evidence="2">
    <location>
        <begin position="998"/>
        <end position="1013"/>
    </location>
</feature>
<feature type="transmembrane region" description="Helical" evidence="2">
    <location>
        <begin position="1014"/>
        <end position="1034"/>
    </location>
</feature>
<feature type="topological domain" description="Extracellular" evidence="2">
    <location>
        <begin position="1035"/>
        <end position="1058"/>
    </location>
</feature>
<feature type="transmembrane region" description="Helical" evidence="2">
    <location>
        <begin position="1059"/>
        <end position="1079"/>
    </location>
</feature>
<feature type="topological domain" description="Cytoplasmic" evidence="2">
    <location>
        <begin position="1080"/>
        <end position="1097"/>
    </location>
</feature>
<feature type="transmembrane region" description="Helical" evidence="2">
    <location>
        <begin position="1098"/>
        <end position="1118"/>
    </location>
</feature>
<feature type="topological domain" description="Extracellular" evidence="2">
    <location>
        <begin position="1119"/>
        <end position="1132"/>
    </location>
</feature>
<feature type="transmembrane region" description="Helical" evidence="2">
    <location>
        <begin position="1133"/>
        <end position="1153"/>
    </location>
</feature>
<feature type="topological domain" description="Cytoplasmic" evidence="2">
    <location>
        <begin position="1154"/>
        <end position="1267"/>
    </location>
</feature>
<feature type="region of interest" description="Disordered" evidence="3">
    <location>
        <begin position="1232"/>
        <end position="1256"/>
    </location>
</feature>
<feature type="active site" description="4-aspartylphosphate intermediate" evidence="1">
    <location>
        <position position="476"/>
    </location>
</feature>
<feature type="binding site" evidence="1">
    <location>
        <position position="891"/>
    </location>
    <ligand>
        <name>Mg(2+)</name>
        <dbReference type="ChEBI" id="CHEBI:18420"/>
    </ligand>
</feature>
<feature type="binding site" evidence="1">
    <location>
        <position position="895"/>
    </location>
    <ligand>
        <name>Mg(2+)</name>
        <dbReference type="ChEBI" id="CHEBI:18420"/>
    </ligand>
</feature>
<reference key="1">
    <citation type="journal article" date="1998" name="Science">
        <title>Genome sequence of the nematode C. elegans: a platform for investigating biology.</title>
        <authorList>
            <consortium name="The C. elegans sequencing consortium"/>
        </authorList>
    </citation>
    <scope>NUCLEOTIDE SEQUENCE [LARGE SCALE GENOMIC DNA]</scope>
    <source>
        <strain>Bristol N2</strain>
    </source>
</reference>
<proteinExistence type="inferred from homology"/>
<gene>
    <name evidence="5" type="primary">catp-6</name>
    <name evidence="5" type="ORF">W08D2.5</name>
</gene>
<dbReference type="EC" id="7.2.2.-" evidence="4"/>
<dbReference type="EMBL" id="Z70271">
    <property type="protein sequence ID" value="CAA94236.2"/>
    <property type="molecule type" value="Genomic_DNA"/>
</dbReference>
<dbReference type="PIR" id="T26283">
    <property type="entry name" value="T26283"/>
</dbReference>
<dbReference type="RefSeq" id="NP_001255430.1">
    <property type="nucleotide sequence ID" value="NM_001268501.1"/>
</dbReference>
<dbReference type="SMR" id="Q27533"/>
<dbReference type="BioGRID" id="42926">
    <property type="interactions" value="1"/>
</dbReference>
<dbReference type="FunCoup" id="Q27533">
    <property type="interactions" value="1267"/>
</dbReference>
<dbReference type="IntAct" id="Q27533">
    <property type="interactions" value="1"/>
</dbReference>
<dbReference type="MINT" id="Q27533"/>
<dbReference type="STRING" id="6239.W08D2.5a.1"/>
<dbReference type="PaxDb" id="6239-W08D2.5a"/>
<dbReference type="EnsemblMetazoa" id="W08D2.5a.1">
    <property type="protein sequence ID" value="W08D2.5a.1"/>
    <property type="gene ID" value="WBGene00012341"/>
</dbReference>
<dbReference type="KEGG" id="cel:CELE_W08D2.5"/>
<dbReference type="UCSC" id="W08D2.5">
    <property type="organism name" value="c. elegans"/>
</dbReference>
<dbReference type="AGR" id="WB:WBGene00012341"/>
<dbReference type="CTD" id="177822"/>
<dbReference type="WormBase" id="W08D2.5a">
    <property type="protein sequence ID" value="CE53002"/>
    <property type="gene ID" value="WBGene00012341"/>
    <property type="gene designation" value="catp-6"/>
</dbReference>
<dbReference type="eggNOG" id="KOG0208">
    <property type="taxonomic scope" value="Eukaryota"/>
</dbReference>
<dbReference type="GeneTree" id="ENSGT00940000168207"/>
<dbReference type="InParanoid" id="Q27533"/>
<dbReference type="OMA" id="VWISDEY"/>
<dbReference type="OrthoDB" id="48943at2759"/>
<dbReference type="PhylomeDB" id="Q27533"/>
<dbReference type="Reactome" id="R-CEL-936837">
    <property type="pathway name" value="Ion transport by P-type ATPases"/>
</dbReference>
<dbReference type="PRO" id="PR:Q27533"/>
<dbReference type="Proteomes" id="UP000001940">
    <property type="component" value="Chromosome IV"/>
</dbReference>
<dbReference type="Bgee" id="WBGene00012341">
    <property type="expression patterns" value="Expressed in adult organism and 4 other cell types or tissues"/>
</dbReference>
<dbReference type="ExpressionAtlas" id="Q27533">
    <property type="expression patterns" value="baseline and differential"/>
</dbReference>
<dbReference type="GO" id="GO:0031410">
    <property type="term" value="C:cytoplasmic vesicle"/>
    <property type="evidence" value="ECO:0000314"/>
    <property type="project" value="WormBase"/>
</dbReference>
<dbReference type="GO" id="GO:0016020">
    <property type="term" value="C:membrane"/>
    <property type="evidence" value="ECO:0000318"/>
    <property type="project" value="GO_Central"/>
</dbReference>
<dbReference type="GO" id="GO:0005886">
    <property type="term" value="C:plasma membrane"/>
    <property type="evidence" value="ECO:0000314"/>
    <property type="project" value="WormBase"/>
</dbReference>
<dbReference type="GO" id="GO:0005774">
    <property type="term" value="C:vacuolar membrane"/>
    <property type="evidence" value="ECO:0000250"/>
    <property type="project" value="WormBase"/>
</dbReference>
<dbReference type="GO" id="GO:0005524">
    <property type="term" value="F:ATP binding"/>
    <property type="evidence" value="ECO:0007669"/>
    <property type="project" value="UniProtKB-KW"/>
</dbReference>
<dbReference type="GO" id="GO:0016887">
    <property type="term" value="F:ATP hydrolysis activity"/>
    <property type="evidence" value="ECO:0007669"/>
    <property type="project" value="InterPro"/>
</dbReference>
<dbReference type="GO" id="GO:0019829">
    <property type="term" value="F:ATPase-coupled monoatomic cation transmembrane transporter activity"/>
    <property type="evidence" value="ECO:0000318"/>
    <property type="project" value="GO_Central"/>
</dbReference>
<dbReference type="GO" id="GO:0046872">
    <property type="term" value="F:metal ion binding"/>
    <property type="evidence" value="ECO:0007669"/>
    <property type="project" value="UniProtKB-KW"/>
</dbReference>
<dbReference type="GO" id="GO:0015662">
    <property type="term" value="F:P-type ion transporter activity"/>
    <property type="evidence" value="ECO:0007669"/>
    <property type="project" value="InterPro"/>
</dbReference>
<dbReference type="GO" id="GO:0015203">
    <property type="term" value="F:polyamine transmembrane transporter activity"/>
    <property type="evidence" value="ECO:0000318"/>
    <property type="project" value="GO_Central"/>
</dbReference>
<dbReference type="GO" id="GO:0006874">
    <property type="term" value="P:intracellular calcium ion homeostasis"/>
    <property type="evidence" value="ECO:0000318"/>
    <property type="project" value="GO_Central"/>
</dbReference>
<dbReference type="GO" id="GO:1902047">
    <property type="term" value="P:polyamine transmembrane transport"/>
    <property type="evidence" value="ECO:0000318"/>
    <property type="project" value="GO_Central"/>
</dbReference>
<dbReference type="GO" id="GO:0006457">
    <property type="term" value="P:protein folding"/>
    <property type="evidence" value="ECO:0000316"/>
    <property type="project" value="WormBase"/>
</dbReference>
<dbReference type="CDD" id="cd07542">
    <property type="entry name" value="P-type_ATPase_cation"/>
    <property type="match status" value="1"/>
</dbReference>
<dbReference type="FunFam" id="1.20.1110.10:FF:000034">
    <property type="entry name" value="Cation-transporting ATPase"/>
    <property type="match status" value="1"/>
</dbReference>
<dbReference type="FunFam" id="2.70.150.10:FF:000109">
    <property type="entry name" value="Cation-transporting ATPase"/>
    <property type="match status" value="1"/>
</dbReference>
<dbReference type="FunFam" id="3.40.1110.10:FF:000130">
    <property type="entry name" value="Cation-transporting ATPase"/>
    <property type="match status" value="1"/>
</dbReference>
<dbReference type="Gene3D" id="3.40.1110.10">
    <property type="entry name" value="Calcium-transporting ATPase, cytoplasmic domain N"/>
    <property type="match status" value="1"/>
</dbReference>
<dbReference type="Gene3D" id="2.70.150.10">
    <property type="entry name" value="Calcium-transporting ATPase, cytoplasmic transduction domain A"/>
    <property type="match status" value="1"/>
</dbReference>
<dbReference type="Gene3D" id="1.20.1110.10">
    <property type="entry name" value="Calcium-transporting ATPase, transmembrane domain"/>
    <property type="match status" value="1"/>
</dbReference>
<dbReference type="Gene3D" id="3.40.50.1000">
    <property type="entry name" value="HAD superfamily/HAD-like"/>
    <property type="match status" value="1"/>
</dbReference>
<dbReference type="InterPro" id="IPR004014">
    <property type="entry name" value="ATPase_P-typ_cation-transptr_N"/>
</dbReference>
<dbReference type="InterPro" id="IPR023299">
    <property type="entry name" value="ATPase_P-typ_cyto_dom_N"/>
</dbReference>
<dbReference type="InterPro" id="IPR018303">
    <property type="entry name" value="ATPase_P-typ_P_site"/>
</dbReference>
<dbReference type="InterPro" id="IPR023298">
    <property type="entry name" value="ATPase_P-typ_TM_dom_sf"/>
</dbReference>
<dbReference type="InterPro" id="IPR008250">
    <property type="entry name" value="ATPase_P-typ_transduc_dom_A_sf"/>
</dbReference>
<dbReference type="InterPro" id="IPR036412">
    <property type="entry name" value="HAD-like_sf"/>
</dbReference>
<dbReference type="InterPro" id="IPR023214">
    <property type="entry name" value="HAD_sf"/>
</dbReference>
<dbReference type="InterPro" id="IPR006544">
    <property type="entry name" value="P-type_TPase_V"/>
</dbReference>
<dbReference type="InterPro" id="IPR047819">
    <property type="entry name" value="P5A-ATPase_N"/>
</dbReference>
<dbReference type="InterPro" id="IPR047821">
    <property type="entry name" value="P5B-type_ATPase"/>
</dbReference>
<dbReference type="InterPro" id="IPR001757">
    <property type="entry name" value="P_typ_ATPase"/>
</dbReference>
<dbReference type="InterPro" id="IPR044492">
    <property type="entry name" value="P_typ_ATPase_HD_dom"/>
</dbReference>
<dbReference type="NCBIfam" id="TIGR01494">
    <property type="entry name" value="ATPase_P-type"/>
    <property type="match status" value="2"/>
</dbReference>
<dbReference type="NCBIfam" id="TIGR01657">
    <property type="entry name" value="P-ATPase-V"/>
    <property type="match status" value="1"/>
</dbReference>
<dbReference type="PANTHER" id="PTHR45630:SF8">
    <property type="entry name" value="CATION-TRANSPORTING ATPASE"/>
    <property type="match status" value="1"/>
</dbReference>
<dbReference type="PANTHER" id="PTHR45630">
    <property type="entry name" value="CATION-TRANSPORTING ATPASE-RELATED"/>
    <property type="match status" value="1"/>
</dbReference>
<dbReference type="Pfam" id="PF13246">
    <property type="entry name" value="Cation_ATPase"/>
    <property type="match status" value="1"/>
</dbReference>
<dbReference type="Pfam" id="PF00690">
    <property type="entry name" value="Cation_ATPase_N"/>
    <property type="match status" value="1"/>
</dbReference>
<dbReference type="Pfam" id="PF00122">
    <property type="entry name" value="E1-E2_ATPase"/>
    <property type="match status" value="1"/>
</dbReference>
<dbReference type="Pfam" id="PF12409">
    <property type="entry name" value="P5-ATPase"/>
    <property type="match status" value="1"/>
</dbReference>
<dbReference type="PRINTS" id="PR00119">
    <property type="entry name" value="CATATPASE"/>
</dbReference>
<dbReference type="SFLD" id="SFLDG00002">
    <property type="entry name" value="C1.7:_P-type_atpase_like"/>
    <property type="match status" value="1"/>
</dbReference>
<dbReference type="SFLD" id="SFLDF00027">
    <property type="entry name" value="p-type_atpase"/>
    <property type="match status" value="1"/>
</dbReference>
<dbReference type="SUPFAM" id="SSF81653">
    <property type="entry name" value="Calcium ATPase, transduction domain A"/>
    <property type="match status" value="1"/>
</dbReference>
<dbReference type="SUPFAM" id="SSF81665">
    <property type="entry name" value="Calcium ATPase, transmembrane domain M"/>
    <property type="match status" value="1"/>
</dbReference>
<dbReference type="SUPFAM" id="SSF56784">
    <property type="entry name" value="HAD-like"/>
    <property type="match status" value="1"/>
</dbReference>
<dbReference type="SUPFAM" id="SSF81660">
    <property type="entry name" value="Metal cation-transporting ATPase, ATP-binding domain N"/>
    <property type="match status" value="1"/>
</dbReference>
<dbReference type="PROSITE" id="PS00154">
    <property type="entry name" value="ATPASE_E1_E2"/>
    <property type="match status" value="1"/>
</dbReference>